<dbReference type="EC" id="1.14.99.60" evidence="1"/>
<dbReference type="EMBL" id="CP000572">
    <property type="protein sequence ID" value="ABN91018.1"/>
    <property type="molecule type" value="Genomic_DNA"/>
</dbReference>
<dbReference type="RefSeq" id="WP_004527787.1">
    <property type="nucleotide sequence ID" value="NC_009076.1"/>
</dbReference>
<dbReference type="SMR" id="A3NZM5"/>
<dbReference type="KEGG" id="bpl:BURPS1106A_3560"/>
<dbReference type="HOGENOM" id="CLU_088601_0_0_4"/>
<dbReference type="UniPathway" id="UPA00232"/>
<dbReference type="Proteomes" id="UP000006738">
    <property type="component" value="Chromosome I"/>
</dbReference>
<dbReference type="GO" id="GO:0005886">
    <property type="term" value="C:plasma membrane"/>
    <property type="evidence" value="ECO:0007669"/>
    <property type="project" value="UniProtKB-SubCell"/>
</dbReference>
<dbReference type="GO" id="GO:0008682">
    <property type="term" value="F:3-demethoxyubiquinol 3-hydroxylase activity"/>
    <property type="evidence" value="ECO:0007669"/>
    <property type="project" value="UniProtKB-EC"/>
</dbReference>
<dbReference type="GO" id="GO:0046872">
    <property type="term" value="F:metal ion binding"/>
    <property type="evidence" value="ECO:0007669"/>
    <property type="project" value="UniProtKB-KW"/>
</dbReference>
<dbReference type="GO" id="GO:0006744">
    <property type="term" value="P:ubiquinone biosynthetic process"/>
    <property type="evidence" value="ECO:0007669"/>
    <property type="project" value="UniProtKB-UniRule"/>
</dbReference>
<dbReference type="CDD" id="cd01042">
    <property type="entry name" value="DMQH"/>
    <property type="match status" value="1"/>
</dbReference>
<dbReference type="Gene3D" id="1.20.1260.10">
    <property type="match status" value="1"/>
</dbReference>
<dbReference type="HAMAP" id="MF_01658">
    <property type="entry name" value="COQ7"/>
    <property type="match status" value="1"/>
</dbReference>
<dbReference type="InterPro" id="IPR047809">
    <property type="entry name" value="COQ7_proteobact"/>
</dbReference>
<dbReference type="InterPro" id="IPR012347">
    <property type="entry name" value="Ferritin-like"/>
</dbReference>
<dbReference type="InterPro" id="IPR009078">
    <property type="entry name" value="Ferritin-like_SF"/>
</dbReference>
<dbReference type="InterPro" id="IPR011566">
    <property type="entry name" value="Ubq_synth_Coq7"/>
</dbReference>
<dbReference type="NCBIfam" id="NF033656">
    <property type="entry name" value="DMQ_monoox_COQ7"/>
    <property type="match status" value="1"/>
</dbReference>
<dbReference type="PANTHER" id="PTHR11237:SF4">
    <property type="entry name" value="5-DEMETHOXYUBIQUINONE HYDROXYLASE, MITOCHONDRIAL"/>
    <property type="match status" value="1"/>
</dbReference>
<dbReference type="PANTHER" id="PTHR11237">
    <property type="entry name" value="COENZYME Q10 BIOSYNTHESIS PROTEIN 7"/>
    <property type="match status" value="1"/>
</dbReference>
<dbReference type="Pfam" id="PF03232">
    <property type="entry name" value="COQ7"/>
    <property type="match status" value="1"/>
</dbReference>
<dbReference type="SUPFAM" id="SSF47240">
    <property type="entry name" value="Ferritin-like"/>
    <property type="match status" value="1"/>
</dbReference>
<name>COQ7_BURP0</name>
<gene>
    <name evidence="1" type="primary">coq7</name>
    <name type="ordered locus">BURPS1106A_3560</name>
</gene>
<comment type="function">
    <text evidence="1">Catalyzes the hydroxylation of 2-nonaprenyl-3-methyl-6-methoxy-1,4-benzoquinol during ubiquinone biosynthesis.</text>
</comment>
<comment type="catalytic activity">
    <reaction evidence="1">
        <text>a 5-methoxy-2-methyl-3-(all-trans-polyprenyl)benzene-1,4-diol + AH2 + O2 = a 3-demethylubiquinol + A + H2O</text>
        <dbReference type="Rhea" id="RHEA:50908"/>
        <dbReference type="Rhea" id="RHEA-COMP:10859"/>
        <dbReference type="Rhea" id="RHEA-COMP:10914"/>
        <dbReference type="ChEBI" id="CHEBI:13193"/>
        <dbReference type="ChEBI" id="CHEBI:15377"/>
        <dbReference type="ChEBI" id="CHEBI:15379"/>
        <dbReference type="ChEBI" id="CHEBI:17499"/>
        <dbReference type="ChEBI" id="CHEBI:84167"/>
        <dbReference type="ChEBI" id="CHEBI:84422"/>
        <dbReference type="EC" id="1.14.99.60"/>
    </reaction>
</comment>
<comment type="cofactor">
    <cofactor evidence="1">
        <name>Fe cation</name>
        <dbReference type="ChEBI" id="CHEBI:24875"/>
    </cofactor>
    <text evidence="1">Binds 2 iron ions per subunit.</text>
</comment>
<comment type="pathway">
    <text evidence="1">Cofactor biosynthesis; ubiquinone biosynthesis.</text>
</comment>
<comment type="subcellular location">
    <subcellularLocation>
        <location evidence="1">Cell membrane</location>
        <topology evidence="1">Peripheral membrane protein</topology>
    </subcellularLocation>
</comment>
<comment type="similarity">
    <text evidence="1">Belongs to the COQ7 family.</text>
</comment>
<organism>
    <name type="scientific">Burkholderia pseudomallei (strain 1106a)</name>
    <dbReference type="NCBI Taxonomy" id="357348"/>
    <lineage>
        <taxon>Bacteria</taxon>
        <taxon>Pseudomonadati</taxon>
        <taxon>Pseudomonadota</taxon>
        <taxon>Betaproteobacteria</taxon>
        <taxon>Burkholderiales</taxon>
        <taxon>Burkholderiaceae</taxon>
        <taxon>Burkholderia</taxon>
        <taxon>pseudomallei group</taxon>
    </lineage>
</organism>
<proteinExistence type="inferred from homology"/>
<protein>
    <recommendedName>
        <fullName evidence="1">3-demethoxyubiquinol 3-hydroxylase</fullName>
        <shortName evidence="1">DMQ hydroxylase</shortName>
        <ecNumber evidence="1">1.14.99.60</ecNumber>
    </recommendedName>
    <alternativeName>
        <fullName evidence="1">2-nonaprenyl-3-methyl-6-methoxy-1,4-benzoquinol hydroxylase</fullName>
    </alternativeName>
</protein>
<keyword id="KW-1003">Cell membrane</keyword>
<keyword id="KW-0408">Iron</keyword>
<keyword id="KW-0472">Membrane</keyword>
<keyword id="KW-0479">Metal-binding</keyword>
<keyword id="KW-0503">Monooxygenase</keyword>
<keyword id="KW-0560">Oxidoreductase</keyword>
<keyword id="KW-0831">Ubiquinone biosynthesis</keyword>
<sequence length="208" mass="22593">MVFDELITEFDRGLRSIAGVSRMSRPVPKPAAAAPAELSAAERKHAAGLMRVNHVGEVCAQALYQAQKLTTSSAGLKEMFEHAAREEEDHLAWTAHRLKDLDSRPSLLNPLWYAGALAIGVVAGRLGDKMSLGFMAETERQVESHLDGHLSELPAADVESRAIVEQMRADEVKHGKSATDAGGIELPMPARMLMRAASKVMTSTAYYL</sequence>
<accession>A3NZM5</accession>
<feature type="chain" id="PRO_0000338671" description="3-demethoxyubiquinol 3-hydroxylase">
    <location>
        <begin position="1"/>
        <end position="208"/>
    </location>
</feature>
<feature type="binding site" evidence="1">
    <location>
        <position position="57"/>
    </location>
    <ligand>
        <name>Fe cation</name>
        <dbReference type="ChEBI" id="CHEBI:24875"/>
        <label>1</label>
    </ligand>
</feature>
<feature type="binding site" evidence="1">
    <location>
        <position position="87"/>
    </location>
    <ligand>
        <name>Fe cation</name>
        <dbReference type="ChEBI" id="CHEBI:24875"/>
        <label>1</label>
    </ligand>
</feature>
<feature type="binding site" evidence="1">
    <location>
        <position position="87"/>
    </location>
    <ligand>
        <name>Fe cation</name>
        <dbReference type="ChEBI" id="CHEBI:24875"/>
        <label>2</label>
    </ligand>
</feature>
<feature type="binding site" evidence="1">
    <location>
        <position position="90"/>
    </location>
    <ligand>
        <name>Fe cation</name>
        <dbReference type="ChEBI" id="CHEBI:24875"/>
        <label>1</label>
    </ligand>
</feature>
<feature type="binding site" evidence="1">
    <location>
        <position position="139"/>
    </location>
    <ligand>
        <name>Fe cation</name>
        <dbReference type="ChEBI" id="CHEBI:24875"/>
        <label>2</label>
    </ligand>
</feature>
<feature type="binding site" evidence="1">
    <location>
        <position position="171"/>
    </location>
    <ligand>
        <name>Fe cation</name>
        <dbReference type="ChEBI" id="CHEBI:24875"/>
        <label>1</label>
    </ligand>
</feature>
<feature type="binding site" evidence="1">
    <location>
        <position position="171"/>
    </location>
    <ligand>
        <name>Fe cation</name>
        <dbReference type="ChEBI" id="CHEBI:24875"/>
        <label>2</label>
    </ligand>
</feature>
<feature type="binding site" evidence="1">
    <location>
        <position position="174"/>
    </location>
    <ligand>
        <name>Fe cation</name>
        <dbReference type="ChEBI" id="CHEBI:24875"/>
        <label>2</label>
    </ligand>
</feature>
<evidence type="ECO:0000255" key="1">
    <source>
        <dbReference type="HAMAP-Rule" id="MF_01658"/>
    </source>
</evidence>
<reference key="1">
    <citation type="journal article" date="2010" name="Genome Biol. Evol.">
        <title>Continuing evolution of Burkholderia mallei through genome reduction and large-scale rearrangements.</title>
        <authorList>
            <person name="Losada L."/>
            <person name="Ronning C.M."/>
            <person name="DeShazer D."/>
            <person name="Woods D."/>
            <person name="Fedorova N."/>
            <person name="Kim H.S."/>
            <person name="Shabalina S.A."/>
            <person name="Pearson T.R."/>
            <person name="Brinkac L."/>
            <person name="Tan P."/>
            <person name="Nandi T."/>
            <person name="Crabtree J."/>
            <person name="Badger J."/>
            <person name="Beckstrom-Sternberg S."/>
            <person name="Saqib M."/>
            <person name="Schutzer S.E."/>
            <person name="Keim P."/>
            <person name="Nierman W.C."/>
        </authorList>
    </citation>
    <scope>NUCLEOTIDE SEQUENCE [LARGE SCALE GENOMIC DNA]</scope>
    <source>
        <strain>1106a</strain>
    </source>
</reference>